<gene>
    <name evidence="1" type="primary">pyrE</name>
    <name type="synonym">umpA</name>
    <name type="ordered locus">BQ2027_MB0389C</name>
</gene>
<name>PYRE_MYCBO</name>
<proteinExistence type="inferred from homology"/>
<reference key="1">
    <citation type="journal article" date="2003" name="Proc. Natl. Acad. Sci. U.S.A.">
        <title>The complete genome sequence of Mycobacterium bovis.</title>
        <authorList>
            <person name="Garnier T."/>
            <person name="Eiglmeier K."/>
            <person name="Camus J.-C."/>
            <person name="Medina N."/>
            <person name="Mansoor H."/>
            <person name="Pryor M."/>
            <person name="Duthoy S."/>
            <person name="Grondin S."/>
            <person name="Lacroix C."/>
            <person name="Monsempe C."/>
            <person name="Simon S."/>
            <person name="Harris B."/>
            <person name="Atkin R."/>
            <person name="Doggett J."/>
            <person name="Mayes R."/>
            <person name="Keating L."/>
            <person name="Wheeler P.R."/>
            <person name="Parkhill J."/>
            <person name="Barrell B.G."/>
            <person name="Cole S.T."/>
            <person name="Gordon S.V."/>
            <person name="Hewinson R.G."/>
        </authorList>
    </citation>
    <scope>NUCLEOTIDE SEQUENCE [LARGE SCALE GENOMIC DNA]</scope>
    <source>
        <strain>ATCC BAA-935 / AF2122/97</strain>
    </source>
</reference>
<reference key="2">
    <citation type="journal article" date="2017" name="Genome Announc.">
        <title>Updated reference genome sequence and annotation of Mycobacterium bovis AF2122/97.</title>
        <authorList>
            <person name="Malone K.M."/>
            <person name="Farrell D."/>
            <person name="Stuber T.P."/>
            <person name="Schubert O.T."/>
            <person name="Aebersold R."/>
            <person name="Robbe-Austerman S."/>
            <person name="Gordon S.V."/>
        </authorList>
    </citation>
    <scope>NUCLEOTIDE SEQUENCE [LARGE SCALE GENOMIC DNA]</scope>
    <scope>GENOME REANNOTATION</scope>
    <source>
        <strain>ATCC BAA-935 / AF2122/97</strain>
    </source>
</reference>
<evidence type="ECO:0000255" key="1">
    <source>
        <dbReference type="HAMAP-Rule" id="MF_01208"/>
    </source>
</evidence>
<protein>
    <recommendedName>
        <fullName evidence="1">Orotate phosphoribosyltransferase</fullName>
        <shortName evidence="1">OPRT</shortName>
        <shortName evidence="1">OPRTase</shortName>
        <ecNumber evidence="1">2.4.2.10</ecNumber>
    </recommendedName>
</protein>
<dbReference type="EC" id="2.4.2.10" evidence="1"/>
<dbReference type="EMBL" id="LT708304">
    <property type="protein sequence ID" value="SIT98956.1"/>
    <property type="molecule type" value="Genomic_DNA"/>
</dbReference>
<dbReference type="RefSeq" id="NP_854052.1">
    <property type="nucleotide sequence ID" value="NC_002945.3"/>
</dbReference>
<dbReference type="RefSeq" id="WP_003401894.1">
    <property type="nucleotide sequence ID" value="NC_002945.4"/>
</dbReference>
<dbReference type="SMR" id="P0A5U1"/>
<dbReference type="GeneID" id="45424348"/>
<dbReference type="PATRIC" id="fig|233413.5.peg.424"/>
<dbReference type="UniPathway" id="UPA00070">
    <property type="reaction ID" value="UER00119"/>
</dbReference>
<dbReference type="Proteomes" id="UP000001419">
    <property type="component" value="Chromosome"/>
</dbReference>
<dbReference type="GO" id="GO:0000287">
    <property type="term" value="F:magnesium ion binding"/>
    <property type="evidence" value="ECO:0007669"/>
    <property type="project" value="UniProtKB-UniRule"/>
</dbReference>
<dbReference type="GO" id="GO:0004588">
    <property type="term" value="F:orotate phosphoribosyltransferase activity"/>
    <property type="evidence" value="ECO:0007669"/>
    <property type="project" value="UniProtKB-UniRule"/>
</dbReference>
<dbReference type="GO" id="GO:0044205">
    <property type="term" value="P:'de novo' UMP biosynthetic process"/>
    <property type="evidence" value="ECO:0007669"/>
    <property type="project" value="UniProtKB-UniRule"/>
</dbReference>
<dbReference type="GO" id="GO:0019856">
    <property type="term" value="P:pyrimidine nucleobase biosynthetic process"/>
    <property type="evidence" value="ECO:0007669"/>
    <property type="project" value="TreeGrafter"/>
</dbReference>
<dbReference type="CDD" id="cd06223">
    <property type="entry name" value="PRTases_typeI"/>
    <property type="match status" value="1"/>
</dbReference>
<dbReference type="FunFam" id="3.40.50.2020:FF:000029">
    <property type="entry name" value="Orotate phosphoribosyltransferase"/>
    <property type="match status" value="1"/>
</dbReference>
<dbReference type="Gene3D" id="3.40.50.2020">
    <property type="match status" value="1"/>
</dbReference>
<dbReference type="HAMAP" id="MF_01208">
    <property type="entry name" value="PyrE"/>
    <property type="match status" value="1"/>
</dbReference>
<dbReference type="InterPro" id="IPR023031">
    <property type="entry name" value="OPRT"/>
</dbReference>
<dbReference type="InterPro" id="IPR004467">
    <property type="entry name" value="Or_phspho_trans_dom"/>
</dbReference>
<dbReference type="InterPro" id="IPR000836">
    <property type="entry name" value="PRibTrfase_dom"/>
</dbReference>
<dbReference type="InterPro" id="IPR029057">
    <property type="entry name" value="PRTase-like"/>
</dbReference>
<dbReference type="NCBIfam" id="TIGR00336">
    <property type="entry name" value="pyrE"/>
    <property type="match status" value="1"/>
</dbReference>
<dbReference type="PANTHER" id="PTHR19278">
    <property type="entry name" value="OROTATE PHOSPHORIBOSYLTRANSFERASE"/>
    <property type="match status" value="1"/>
</dbReference>
<dbReference type="PANTHER" id="PTHR19278:SF9">
    <property type="entry name" value="URIDINE 5'-MONOPHOSPHATE SYNTHASE"/>
    <property type="match status" value="1"/>
</dbReference>
<dbReference type="Pfam" id="PF00156">
    <property type="entry name" value="Pribosyltran"/>
    <property type="match status" value="1"/>
</dbReference>
<dbReference type="SUPFAM" id="SSF53271">
    <property type="entry name" value="PRTase-like"/>
    <property type="match status" value="1"/>
</dbReference>
<accession>P0A5U1</accession>
<accession>A0A1R3XXB0</accession>
<accession>O53717</accession>
<accession>X2BEW3</accession>
<keyword id="KW-0328">Glycosyltransferase</keyword>
<keyword id="KW-0460">Magnesium</keyword>
<keyword id="KW-0665">Pyrimidine biosynthesis</keyword>
<keyword id="KW-1185">Reference proteome</keyword>
<keyword id="KW-0808">Transferase</keyword>
<sequence length="179" mass="18892">MAGPDRAELAELVRRLSVVHGRVTLSSGREADYYVDLRRATLHHRASALIGRLMRELTADWDYSVVGGLTLGADPVATAIMHAPGRPIDAFVVRKSAKAHGMQRLIEGSEVTGQRVLVVEDTSTTGNSALTAVHAVQDVGGEVVGVATVVDRATGAAEAIEAEGLRYRSVLGLADLGLD</sequence>
<feature type="chain" id="PRO_0000110713" description="Orotate phosphoribosyltransferase">
    <location>
        <begin position="1"/>
        <end position="179"/>
    </location>
</feature>
<feature type="binding site" evidence="1">
    <location>
        <position position="94"/>
    </location>
    <ligand>
        <name>5-phospho-alpha-D-ribose 1-diphosphate</name>
        <dbReference type="ChEBI" id="CHEBI:58017"/>
        <note>ligand shared between dimeric partners</note>
    </ligand>
</feature>
<feature type="binding site" description="in other chain" evidence="1">
    <location>
        <position position="95"/>
    </location>
    <ligand>
        <name>5-phospho-alpha-D-ribose 1-diphosphate</name>
        <dbReference type="ChEBI" id="CHEBI:58017"/>
        <note>ligand shared between dimeric partners</note>
    </ligand>
</feature>
<feature type="binding site" evidence="1">
    <location>
        <position position="98"/>
    </location>
    <ligand>
        <name>5-phospho-alpha-D-ribose 1-diphosphate</name>
        <dbReference type="ChEBI" id="CHEBI:58017"/>
        <note>ligand shared between dimeric partners</note>
    </ligand>
</feature>
<feature type="binding site" evidence="1">
    <location>
        <position position="100"/>
    </location>
    <ligand>
        <name>5-phospho-alpha-D-ribose 1-diphosphate</name>
        <dbReference type="ChEBI" id="CHEBI:58017"/>
        <note>ligand shared between dimeric partners</note>
    </ligand>
</feature>
<feature type="binding site" description="in other chain" evidence="1">
    <location>
        <begin position="120"/>
        <end position="128"/>
    </location>
    <ligand>
        <name>5-phospho-alpha-D-ribose 1-diphosphate</name>
        <dbReference type="ChEBI" id="CHEBI:58017"/>
        <note>ligand shared between dimeric partners</note>
    </ligand>
</feature>
<feature type="binding site" evidence="1">
    <location>
        <position position="124"/>
    </location>
    <ligand>
        <name>orotate</name>
        <dbReference type="ChEBI" id="CHEBI:30839"/>
    </ligand>
</feature>
<feature type="binding site" evidence="1">
    <location>
        <position position="152"/>
    </location>
    <ligand>
        <name>orotate</name>
        <dbReference type="ChEBI" id="CHEBI:30839"/>
    </ligand>
</feature>
<comment type="function">
    <text evidence="1">Catalyzes the transfer of a ribosyl phosphate group from 5-phosphoribose 1-diphosphate to orotate, leading to the formation of orotidine monophosphate (OMP).</text>
</comment>
<comment type="catalytic activity">
    <reaction evidence="1">
        <text>orotidine 5'-phosphate + diphosphate = orotate + 5-phospho-alpha-D-ribose 1-diphosphate</text>
        <dbReference type="Rhea" id="RHEA:10380"/>
        <dbReference type="ChEBI" id="CHEBI:30839"/>
        <dbReference type="ChEBI" id="CHEBI:33019"/>
        <dbReference type="ChEBI" id="CHEBI:57538"/>
        <dbReference type="ChEBI" id="CHEBI:58017"/>
        <dbReference type="EC" id="2.4.2.10"/>
    </reaction>
</comment>
<comment type="cofactor">
    <cofactor evidence="1">
        <name>Mg(2+)</name>
        <dbReference type="ChEBI" id="CHEBI:18420"/>
    </cofactor>
</comment>
<comment type="pathway">
    <text evidence="1">Pyrimidine metabolism; UMP biosynthesis via de novo pathway; UMP from orotate: step 1/2.</text>
</comment>
<comment type="subunit">
    <text evidence="1">Homodimer.</text>
</comment>
<comment type="similarity">
    <text evidence="1">Belongs to the purine/pyrimidine phosphoribosyltransferase family. PyrE subfamily.</text>
</comment>
<organism>
    <name type="scientific">Mycobacterium bovis (strain ATCC BAA-935 / AF2122/97)</name>
    <dbReference type="NCBI Taxonomy" id="233413"/>
    <lineage>
        <taxon>Bacteria</taxon>
        <taxon>Bacillati</taxon>
        <taxon>Actinomycetota</taxon>
        <taxon>Actinomycetes</taxon>
        <taxon>Mycobacteriales</taxon>
        <taxon>Mycobacteriaceae</taxon>
        <taxon>Mycobacterium</taxon>
        <taxon>Mycobacterium tuberculosis complex</taxon>
    </lineage>
</organism>